<organism>
    <name type="scientific">Guillardia theta</name>
    <name type="common">Cryptophyte</name>
    <name type="synonym">Cryptomonas phi</name>
    <dbReference type="NCBI Taxonomy" id="55529"/>
    <lineage>
        <taxon>Eukaryota</taxon>
        <taxon>Cryptophyceae</taxon>
        <taxon>Pyrenomonadales</taxon>
        <taxon>Geminigeraceae</taxon>
        <taxon>Guillardia</taxon>
    </lineage>
</organism>
<comment type="subcellular location">
    <subcellularLocation>
        <location evidence="1">Plastid</location>
        <location evidence="1">Chloroplast thylakoid membrane</location>
        <topology evidence="1">Multi-pass membrane protein</topology>
    </subcellularLocation>
</comment>
<comment type="similarity">
    <text evidence="3">Belongs to the PsaG/PsaK family.</text>
</comment>
<evidence type="ECO:0000250" key="1"/>
<evidence type="ECO:0000255" key="2"/>
<evidence type="ECO:0000305" key="3"/>
<proteinExistence type="inferred from homology"/>
<dbReference type="EMBL" id="AF041468">
    <property type="protein sequence ID" value="AAC35629.1"/>
    <property type="molecule type" value="Genomic_DNA"/>
</dbReference>
<dbReference type="RefSeq" id="NP_050695.1">
    <property type="nucleotide sequence ID" value="NC_000926.1"/>
</dbReference>
<dbReference type="SMR" id="O78444"/>
<dbReference type="GeneID" id="856986"/>
<dbReference type="HOGENOM" id="CLU_160496_1_0_1"/>
<dbReference type="OMA" id="MIACNIL"/>
<dbReference type="GO" id="GO:0009535">
    <property type="term" value="C:chloroplast thylakoid membrane"/>
    <property type="evidence" value="ECO:0007669"/>
    <property type="project" value="UniProtKB-SubCell"/>
</dbReference>
<dbReference type="GO" id="GO:0009522">
    <property type="term" value="C:photosystem I"/>
    <property type="evidence" value="ECO:0007669"/>
    <property type="project" value="UniProtKB-KW"/>
</dbReference>
<dbReference type="GO" id="GO:0015979">
    <property type="term" value="P:photosynthesis"/>
    <property type="evidence" value="ECO:0007669"/>
    <property type="project" value="UniProtKB-UniRule"/>
</dbReference>
<dbReference type="Gene3D" id="1.20.860.20">
    <property type="entry name" value="Photosystem I PsaK, reaction centre"/>
    <property type="match status" value="1"/>
</dbReference>
<dbReference type="HAMAP" id="MF_00474">
    <property type="entry name" value="PSI_PsaK"/>
    <property type="match status" value="1"/>
</dbReference>
<dbReference type="InterPro" id="IPR035982">
    <property type="entry name" value="PSI_centre_PsaK_sf"/>
</dbReference>
<dbReference type="InterPro" id="IPR000549">
    <property type="entry name" value="PSI_PsaG/PsaK"/>
</dbReference>
<dbReference type="InterPro" id="IPR017492">
    <property type="entry name" value="PSI_PsaK"/>
</dbReference>
<dbReference type="InterPro" id="IPR037101">
    <property type="entry name" value="PSI_PsaK_bact"/>
</dbReference>
<dbReference type="NCBIfam" id="TIGR03049">
    <property type="entry name" value="PS_I_psaK"/>
    <property type="match status" value="1"/>
</dbReference>
<dbReference type="Pfam" id="PF01241">
    <property type="entry name" value="PSI_PSAK"/>
    <property type="match status" value="1"/>
</dbReference>
<dbReference type="SUPFAM" id="SSF81563">
    <property type="entry name" value="Photosystem I reaction center subunit X, PsaK"/>
    <property type="match status" value="1"/>
</dbReference>
<dbReference type="PROSITE" id="PS01026">
    <property type="entry name" value="PHOTOSYSTEM_I_PSAGK"/>
    <property type="match status" value="1"/>
</dbReference>
<geneLocation type="chloroplast"/>
<gene>
    <name type="primary">psaK</name>
</gene>
<feature type="chain" id="PRO_0000206215" description="Photosystem I reaction center subunit PsaK">
    <location>
        <begin position="1"/>
        <end position="87"/>
    </location>
</feature>
<feature type="transmembrane region" description="Helical" evidence="2">
    <location>
        <begin position="13"/>
        <end position="33"/>
    </location>
</feature>
<feature type="transmembrane region" description="Helical" evidence="2">
    <location>
        <begin position="62"/>
        <end position="80"/>
    </location>
</feature>
<name>PSAK_GUITH</name>
<sequence length="87" mass="9129">MNAELLISLVPQTVAWSAKTSSIMILCNVLCIVSARYIIQNKNKGTALPLSGSFSTFGLPELLATTSLGHIIGSGTILGFSYIGLLS</sequence>
<reference key="1">
    <citation type="journal article" date="1999" name="J. Mol. Evol.">
        <title>The plastid genome of the cryptophyte alga, Guillardia theta: complete sequence and conserved synteny groups confirm its common ancestry with red algae.</title>
        <authorList>
            <person name="Douglas S.E."/>
            <person name="Penny S.L."/>
        </authorList>
    </citation>
    <scope>NUCLEOTIDE SEQUENCE [LARGE SCALE GENOMIC DNA]</scope>
</reference>
<protein>
    <recommendedName>
        <fullName>Photosystem I reaction center subunit PsaK</fullName>
    </recommendedName>
    <alternativeName>
        <fullName>PSI-K</fullName>
    </alternativeName>
    <alternativeName>
        <fullName>Photosystem I subunit X</fullName>
    </alternativeName>
</protein>
<keyword id="KW-0150">Chloroplast</keyword>
<keyword id="KW-0472">Membrane</keyword>
<keyword id="KW-0602">Photosynthesis</keyword>
<keyword id="KW-0603">Photosystem I</keyword>
<keyword id="KW-0934">Plastid</keyword>
<keyword id="KW-0793">Thylakoid</keyword>
<keyword id="KW-0812">Transmembrane</keyword>
<keyword id="KW-1133">Transmembrane helix</keyword>
<accession>O78444</accession>